<dbReference type="EMBL" id="X04119">
    <property type="protein sequence ID" value="CAA27731.1"/>
    <property type="molecule type" value="mRNA"/>
</dbReference>
<dbReference type="EMBL" id="M32360">
    <property type="protein sequence ID" value="AAA37248.1"/>
    <property type="molecule type" value="Genomic_DNA"/>
</dbReference>
<dbReference type="EMBL" id="M79361">
    <property type="protein sequence ID" value="AAA37249.1"/>
    <property type="molecule type" value="mRNA"/>
</dbReference>
<dbReference type="EMBL" id="M79362">
    <property type="protein sequence ID" value="AAA37250.1"/>
    <property type="molecule type" value="mRNA"/>
</dbReference>
<dbReference type="EMBL" id="X62772">
    <property type="protein sequence ID" value="CAA44616.1"/>
    <property type="molecule type" value="mRNA"/>
</dbReference>
<dbReference type="EMBL" id="AK145823">
    <property type="protein sequence ID" value="BAE26675.1"/>
    <property type="molecule type" value="mRNA"/>
</dbReference>
<dbReference type="EMBL" id="AC084821">
    <property type="status" value="NOT_ANNOTATED_CDS"/>
    <property type="molecule type" value="Genomic_DNA"/>
</dbReference>
<dbReference type="EMBL" id="CH466520">
    <property type="protein sequence ID" value="EDL39118.1"/>
    <property type="molecule type" value="Genomic_DNA"/>
</dbReference>
<dbReference type="EMBL" id="CH466520">
    <property type="protein sequence ID" value="EDL39119.1"/>
    <property type="molecule type" value="Genomic_DNA"/>
</dbReference>
<dbReference type="EMBL" id="CH466520">
    <property type="protein sequence ID" value="EDL39120.1"/>
    <property type="molecule type" value="Genomic_DNA"/>
</dbReference>
<dbReference type="EMBL" id="CH466520">
    <property type="protein sequence ID" value="EDL39121.1"/>
    <property type="molecule type" value="Genomic_DNA"/>
</dbReference>
<dbReference type="EMBL" id="BC031786">
    <property type="protein sequence ID" value="AAH31786.1"/>
    <property type="molecule type" value="mRNA"/>
</dbReference>
<dbReference type="CCDS" id="CCDS35773.1"/>
<dbReference type="PIR" id="A37887">
    <property type="entry name" value="A37887"/>
</dbReference>
<dbReference type="PIR" id="B37887">
    <property type="entry name" value="B23594"/>
</dbReference>
<dbReference type="PIR" id="I48250">
    <property type="entry name" value="I48250"/>
</dbReference>
<dbReference type="PIR" id="JS0392">
    <property type="entry name" value="A23594"/>
</dbReference>
<dbReference type="RefSeq" id="NP_001292478.1">
    <property type="nucleotide sequence ID" value="NM_001305549.1"/>
</dbReference>
<dbReference type="RefSeq" id="NP_001292479.1">
    <property type="nucleotide sequence ID" value="NM_001305550.1"/>
</dbReference>
<dbReference type="RefSeq" id="NP_001292514.1">
    <property type="nucleotide sequence ID" value="NM_001305585.1"/>
</dbReference>
<dbReference type="RefSeq" id="NP_038502.2">
    <property type="nucleotide sequence ID" value="NM_013474.2"/>
</dbReference>
<dbReference type="PDB" id="8OQ4">
    <property type="method" value="EM"/>
    <property type="resolution" value="2.60 A"/>
    <property type="chains" value="A/B/C/D/E/F/G/H/I/J/K/L/M/N/O/P/Q/R/S/T/U/V/W/Z=24-101"/>
</dbReference>
<dbReference type="PDB" id="8OQ5">
    <property type="method" value="EM"/>
    <property type="resolution" value="2.40 A"/>
    <property type="chains" value="A/B/C/D/E/F/G/H/I/L/M/N=24-101"/>
</dbReference>
<dbReference type="PDBsum" id="8OQ4"/>
<dbReference type="PDBsum" id="8OQ5"/>
<dbReference type="SMR" id="P09813"/>
<dbReference type="BioGRID" id="198156">
    <property type="interactions" value="13"/>
</dbReference>
<dbReference type="FunCoup" id="P09813">
    <property type="interactions" value="220"/>
</dbReference>
<dbReference type="IntAct" id="P09813">
    <property type="interactions" value="1"/>
</dbReference>
<dbReference type="MINT" id="P09813"/>
<dbReference type="STRING" id="10090.ENSMUSP00000106953"/>
<dbReference type="iPTMnet" id="P09813"/>
<dbReference type="PhosphoSitePlus" id="P09813"/>
<dbReference type="CPTAC" id="non-CPTAC-3414"/>
<dbReference type="jPOST" id="P09813"/>
<dbReference type="PaxDb" id="10090-ENSMUSP00000005824"/>
<dbReference type="PeptideAtlas" id="P09813"/>
<dbReference type="ProteomicsDB" id="296334"/>
<dbReference type="Antibodypedia" id="20506">
    <property type="antibodies" value="502 antibodies from 40 providers"/>
</dbReference>
<dbReference type="DNASU" id="11807"/>
<dbReference type="Ensembl" id="ENSMUST00000005824.12">
    <property type="protein sequence ID" value="ENSMUSP00000005824.6"/>
    <property type="gene ID" value="ENSMUSG00000005681.13"/>
</dbReference>
<dbReference type="Ensembl" id="ENSMUST00000111319.2">
    <property type="protein sequence ID" value="ENSMUSP00000106951.2"/>
    <property type="gene ID" value="ENSMUSG00000005681.13"/>
</dbReference>
<dbReference type="Ensembl" id="ENSMUST00000111320.8">
    <property type="protein sequence ID" value="ENSMUSP00000106952.2"/>
    <property type="gene ID" value="ENSMUSG00000005681.13"/>
</dbReference>
<dbReference type="Ensembl" id="ENSMUST00000111321.8">
    <property type="protein sequence ID" value="ENSMUSP00000106953.2"/>
    <property type="gene ID" value="ENSMUSG00000005681.13"/>
</dbReference>
<dbReference type="GeneID" id="11807"/>
<dbReference type="KEGG" id="mmu:11807"/>
<dbReference type="UCSC" id="uc007dnk.2">
    <property type="organism name" value="mouse"/>
</dbReference>
<dbReference type="AGR" id="MGI:88050"/>
<dbReference type="CTD" id="336"/>
<dbReference type="MGI" id="MGI:88050">
    <property type="gene designation" value="Apoa2"/>
</dbReference>
<dbReference type="VEuPathDB" id="HostDB:ENSMUSG00000005681"/>
<dbReference type="eggNOG" id="ENOG502SVYZ">
    <property type="taxonomic scope" value="Eukaryota"/>
</dbReference>
<dbReference type="GeneTree" id="ENSGT00390000003306"/>
<dbReference type="HOGENOM" id="CLU_157351_0_0_1"/>
<dbReference type="InParanoid" id="P09813"/>
<dbReference type="OMA" id="LTICSFE"/>
<dbReference type="OrthoDB" id="9450770at2759"/>
<dbReference type="TreeFam" id="TF338165"/>
<dbReference type="Reactome" id="R-MMU-381426">
    <property type="pathway name" value="Regulation of Insulin-like Growth Factor (IGF) transport and uptake by Insulin-like Growth Factor Binding Proteins (IGFBPs)"/>
</dbReference>
<dbReference type="Reactome" id="R-MMU-8957275">
    <property type="pathway name" value="Post-translational protein phosphorylation"/>
</dbReference>
<dbReference type="Reactome" id="R-MMU-8963888">
    <property type="pathway name" value="Chylomicron assembly"/>
</dbReference>
<dbReference type="Reactome" id="R-MMU-8963901">
    <property type="pathway name" value="Chylomicron remodeling"/>
</dbReference>
<dbReference type="Reactome" id="R-MMU-975634">
    <property type="pathway name" value="Retinoid metabolism and transport"/>
</dbReference>
<dbReference type="BioGRID-ORCS" id="11807">
    <property type="hits" value="3 hits in 79 CRISPR screens"/>
</dbReference>
<dbReference type="ChiTaRS" id="Apoa2">
    <property type="organism name" value="mouse"/>
</dbReference>
<dbReference type="PRO" id="PR:P09813"/>
<dbReference type="Proteomes" id="UP000000589">
    <property type="component" value="Chromosome 1"/>
</dbReference>
<dbReference type="RNAct" id="P09813">
    <property type="molecule type" value="protein"/>
</dbReference>
<dbReference type="Bgee" id="ENSMUSG00000005681">
    <property type="expression patterns" value="Expressed in left lobe of liver and 103 other cell types or tissues"/>
</dbReference>
<dbReference type="GO" id="GO:0042627">
    <property type="term" value="C:chylomicron"/>
    <property type="evidence" value="ECO:0007669"/>
    <property type="project" value="Ensembl"/>
</dbReference>
<dbReference type="GO" id="GO:0005829">
    <property type="term" value="C:cytosol"/>
    <property type="evidence" value="ECO:0000304"/>
    <property type="project" value="Reactome"/>
</dbReference>
<dbReference type="GO" id="GO:0005576">
    <property type="term" value="C:extracellular region"/>
    <property type="evidence" value="ECO:0000304"/>
    <property type="project" value="Reactome"/>
</dbReference>
<dbReference type="GO" id="GO:0005615">
    <property type="term" value="C:extracellular space"/>
    <property type="evidence" value="ECO:0000314"/>
    <property type="project" value="MGI"/>
</dbReference>
<dbReference type="GO" id="GO:0034366">
    <property type="term" value="C:spherical high-density lipoprotein particle"/>
    <property type="evidence" value="ECO:0007669"/>
    <property type="project" value="Ensembl"/>
</dbReference>
<dbReference type="GO" id="GO:0034361">
    <property type="term" value="C:very-low-density lipoprotein particle"/>
    <property type="evidence" value="ECO:0007669"/>
    <property type="project" value="Ensembl"/>
</dbReference>
<dbReference type="GO" id="GO:0034190">
    <property type="term" value="F:apolipoprotein receptor binding"/>
    <property type="evidence" value="ECO:0007669"/>
    <property type="project" value="Ensembl"/>
</dbReference>
<dbReference type="GO" id="GO:0015485">
    <property type="term" value="F:cholesterol binding"/>
    <property type="evidence" value="ECO:0007669"/>
    <property type="project" value="Ensembl"/>
</dbReference>
<dbReference type="GO" id="GO:0120020">
    <property type="term" value="F:cholesterol transfer activity"/>
    <property type="evidence" value="ECO:0007669"/>
    <property type="project" value="Ensembl"/>
</dbReference>
<dbReference type="GO" id="GO:0019899">
    <property type="term" value="F:enzyme binding"/>
    <property type="evidence" value="ECO:0007669"/>
    <property type="project" value="Ensembl"/>
</dbReference>
<dbReference type="GO" id="GO:0031072">
    <property type="term" value="F:heat shock protein binding"/>
    <property type="evidence" value="ECO:0007669"/>
    <property type="project" value="Ensembl"/>
</dbReference>
<dbReference type="GO" id="GO:0008035">
    <property type="term" value="F:high-density lipoprotein particle binding"/>
    <property type="evidence" value="ECO:0000315"/>
    <property type="project" value="MGI"/>
</dbReference>
<dbReference type="GO" id="GO:0070653">
    <property type="term" value="F:high-density lipoprotein particle receptor binding"/>
    <property type="evidence" value="ECO:0007669"/>
    <property type="project" value="Ensembl"/>
</dbReference>
<dbReference type="GO" id="GO:0055102">
    <property type="term" value="F:lipase inhibitor activity"/>
    <property type="evidence" value="ECO:0007669"/>
    <property type="project" value="Ensembl"/>
</dbReference>
<dbReference type="GO" id="GO:0031210">
    <property type="term" value="F:phosphatidylcholine binding"/>
    <property type="evidence" value="ECO:0007669"/>
    <property type="project" value="Ensembl"/>
</dbReference>
<dbReference type="GO" id="GO:0060228">
    <property type="term" value="F:phosphatidylcholine-sterol O-acyltransferase activator activity"/>
    <property type="evidence" value="ECO:0007669"/>
    <property type="project" value="Ensembl"/>
</dbReference>
<dbReference type="GO" id="GO:0046982">
    <property type="term" value="F:protein heterodimerization activity"/>
    <property type="evidence" value="ECO:0000250"/>
    <property type="project" value="UniProtKB"/>
</dbReference>
<dbReference type="GO" id="GO:0042803">
    <property type="term" value="F:protein homodimerization activity"/>
    <property type="evidence" value="ECO:0007669"/>
    <property type="project" value="Ensembl"/>
</dbReference>
<dbReference type="GO" id="GO:0048018">
    <property type="term" value="F:receptor ligand activity"/>
    <property type="evidence" value="ECO:0007669"/>
    <property type="project" value="Ensembl"/>
</dbReference>
<dbReference type="GO" id="GO:0071402">
    <property type="term" value="P:cellular response to lipoprotein particle stimulus"/>
    <property type="evidence" value="ECO:0007669"/>
    <property type="project" value="Ensembl"/>
</dbReference>
<dbReference type="GO" id="GO:0033344">
    <property type="term" value="P:cholesterol efflux"/>
    <property type="evidence" value="ECO:0007669"/>
    <property type="project" value="Ensembl"/>
</dbReference>
<dbReference type="GO" id="GO:0042632">
    <property type="term" value="P:cholesterol homeostasis"/>
    <property type="evidence" value="ECO:0000314"/>
    <property type="project" value="MGI"/>
</dbReference>
<dbReference type="GO" id="GO:0008203">
    <property type="term" value="P:cholesterol metabolic process"/>
    <property type="evidence" value="ECO:0000315"/>
    <property type="project" value="MGI"/>
</dbReference>
<dbReference type="GO" id="GO:0046340">
    <property type="term" value="P:diacylglycerol catabolic process"/>
    <property type="evidence" value="ECO:0007669"/>
    <property type="project" value="Ensembl"/>
</dbReference>
<dbReference type="GO" id="GO:0034380">
    <property type="term" value="P:high-density lipoprotein particle assembly"/>
    <property type="evidence" value="ECO:0007669"/>
    <property type="project" value="Ensembl"/>
</dbReference>
<dbReference type="GO" id="GO:0034384">
    <property type="term" value="P:high-density lipoprotein particle clearance"/>
    <property type="evidence" value="ECO:0007669"/>
    <property type="project" value="Ensembl"/>
</dbReference>
<dbReference type="GO" id="GO:0034375">
    <property type="term" value="P:high-density lipoprotein particle remodeling"/>
    <property type="evidence" value="ECO:0007669"/>
    <property type="project" value="Ensembl"/>
</dbReference>
<dbReference type="GO" id="GO:0006869">
    <property type="term" value="P:lipid transport"/>
    <property type="evidence" value="ECO:0000315"/>
    <property type="project" value="MGI"/>
</dbReference>
<dbReference type="GO" id="GO:0042157">
    <property type="term" value="P:lipoprotein metabolic process"/>
    <property type="evidence" value="ECO:0000314"/>
    <property type="project" value="MGI"/>
</dbReference>
<dbReference type="GO" id="GO:0034374">
    <property type="term" value="P:low-density lipoprotein particle remodeling"/>
    <property type="evidence" value="ECO:0007669"/>
    <property type="project" value="Ensembl"/>
</dbReference>
<dbReference type="GO" id="GO:0060621">
    <property type="term" value="P:negative regulation of cholesterol import"/>
    <property type="evidence" value="ECO:0007669"/>
    <property type="project" value="Ensembl"/>
</dbReference>
<dbReference type="GO" id="GO:0002719">
    <property type="term" value="P:negative regulation of cytokine production involved in immune response"/>
    <property type="evidence" value="ECO:0007669"/>
    <property type="project" value="Ensembl"/>
</dbReference>
<dbReference type="GO" id="GO:0050995">
    <property type="term" value="P:negative regulation of lipid catabolic process"/>
    <property type="evidence" value="ECO:0007669"/>
    <property type="project" value="Ensembl"/>
</dbReference>
<dbReference type="GO" id="GO:0010903">
    <property type="term" value="P:negative regulation of very-low-density lipoprotein particle remodeling"/>
    <property type="evidence" value="ECO:0007669"/>
    <property type="project" value="Ensembl"/>
</dbReference>
<dbReference type="GO" id="GO:0006656">
    <property type="term" value="P:phosphatidylcholine biosynthetic process"/>
    <property type="evidence" value="ECO:0007669"/>
    <property type="project" value="Ensembl"/>
</dbReference>
<dbReference type="GO" id="GO:0009395">
    <property type="term" value="P:phospholipid catabolic process"/>
    <property type="evidence" value="ECO:0007669"/>
    <property type="project" value="Ensembl"/>
</dbReference>
<dbReference type="GO" id="GO:0033700">
    <property type="term" value="P:phospholipid efflux"/>
    <property type="evidence" value="ECO:0007669"/>
    <property type="project" value="Ensembl"/>
</dbReference>
<dbReference type="GO" id="GO:0032757">
    <property type="term" value="P:positive regulation of interleukin-8 production"/>
    <property type="evidence" value="ECO:0000250"/>
    <property type="project" value="UniProtKB"/>
</dbReference>
<dbReference type="GO" id="GO:0050996">
    <property type="term" value="P:positive regulation of lipid catabolic process"/>
    <property type="evidence" value="ECO:0007669"/>
    <property type="project" value="Ensembl"/>
</dbReference>
<dbReference type="GO" id="GO:0050766">
    <property type="term" value="P:positive regulation of phagocytosis"/>
    <property type="evidence" value="ECO:0000250"/>
    <property type="project" value="UniProtKB"/>
</dbReference>
<dbReference type="GO" id="GO:0050821">
    <property type="term" value="P:protein stabilization"/>
    <property type="evidence" value="ECO:0000250"/>
    <property type="project" value="UniProtKB"/>
</dbReference>
<dbReference type="GO" id="GO:0030300">
    <property type="term" value="P:regulation of intestinal cholesterol absorption"/>
    <property type="evidence" value="ECO:0000315"/>
    <property type="project" value="MGI"/>
</dbReference>
<dbReference type="GO" id="GO:0009749">
    <property type="term" value="P:response to glucose"/>
    <property type="evidence" value="ECO:0007669"/>
    <property type="project" value="Ensembl"/>
</dbReference>
<dbReference type="GO" id="GO:0043691">
    <property type="term" value="P:reverse cholesterol transport"/>
    <property type="evidence" value="ECO:0007669"/>
    <property type="project" value="Ensembl"/>
</dbReference>
<dbReference type="GO" id="GO:0034370">
    <property type="term" value="P:triglyceride-rich lipoprotein particle remodeling"/>
    <property type="evidence" value="ECO:0007669"/>
    <property type="project" value="Ensembl"/>
</dbReference>
<dbReference type="Gene3D" id="6.10.250.100">
    <property type="match status" value="1"/>
</dbReference>
<dbReference type="InterPro" id="IPR006801">
    <property type="entry name" value="ApoA-II"/>
</dbReference>
<dbReference type="InterPro" id="IPR036172">
    <property type="entry name" value="ApoA-II_sf"/>
</dbReference>
<dbReference type="PANTHER" id="PTHR11027">
    <property type="entry name" value="APOLIPOPROTEIN A-II"/>
    <property type="match status" value="1"/>
</dbReference>
<dbReference type="PANTHER" id="PTHR11027:SF0">
    <property type="entry name" value="APOLIPOPROTEIN A-II"/>
    <property type="match status" value="1"/>
</dbReference>
<dbReference type="Pfam" id="PF04711">
    <property type="entry name" value="ApoA-II"/>
    <property type="match status" value="1"/>
</dbReference>
<dbReference type="SUPFAM" id="SSF82936">
    <property type="entry name" value="Apolipoprotein A-II"/>
    <property type="match status" value="1"/>
</dbReference>
<feature type="signal peptide">
    <location>
        <begin position="1"/>
        <end position="18"/>
    </location>
</feature>
<feature type="chain" id="PRO_0000425354" description="Proapolipoprotein A-II">
    <location>
        <begin position="19"/>
        <end position="102"/>
    </location>
</feature>
<feature type="chain" id="PRO_0000002008" description="Apolipoprotein A-II" evidence="5 6">
    <location>
        <begin position="24"/>
        <end position="102"/>
    </location>
</feature>
<feature type="modified residue" description="Methionine sulfoxide" evidence="1">
    <location>
        <position position="49"/>
    </location>
</feature>
<feature type="sequence variant" description="In SAM." evidence="4">
    <original>P</original>
    <variation>Q</variation>
    <location>
        <position position="28"/>
    </location>
</feature>
<feature type="sequence conflict" description="In Ref. 1; CAA27731, 2; AAA37248, 3; AAA37250 and 8; AAH31786." evidence="7" ref="1 2 3 8">
    <original>D</original>
    <variation>E</variation>
    <location>
        <position position="43"/>
    </location>
</feature>
<feature type="sequence conflict" description="In Ref. 4; CAA44616." evidence="7" ref="4">
    <original>L</original>
    <variation>F</variation>
    <location>
        <position position="48"/>
    </location>
</feature>
<feature type="sequence conflict" description="In Ref. 1; CAA27731, 2; AAA37248, 3; AAA37250 and 8; AAH31786." evidence="7" ref="1 2 3 8">
    <original>M</original>
    <variation>V</variation>
    <location>
        <position position="49"/>
    </location>
</feature>
<feature type="sequence conflict" description="In Ref. 1; CAA27731, 3; AAA37250 and 8; AAH31786." evidence="7" ref="1 3 8">
    <original>A</original>
    <variation>V</variation>
    <location>
        <position position="61"/>
    </location>
</feature>
<feature type="strand" evidence="9">
    <location>
        <begin position="28"/>
        <end position="30"/>
    </location>
</feature>
<feature type="strand" evidence="8">
    <location>
        <begin position="32"/>
        <end position="39"/>
    </location>
</feature>
<feature type="strand" evidence="9">
    <location>
        <begin position="41"/>
        <end position="45"/>
    </location>
</feature>
<feature type="strand" evidence="9">
    <location>
        <begin position="48"/>
        <end position="50"/>
    </location>
</feature>
<feature type="strand" evidence="9">
    <location>
        <begin position="69"/>
        <end position="72"/>
    </location>
</feature>
<feature type="strand" evidence="9">
    <location>
        <begin position="75"/>
        <end position="77"/>
    </location>
</feature>
<feature type="strand" evidence="9">
    <location>
        <begin position="83"/>
        <end position="88"/>
    </location>
</feature>
<feature type="strand" evidence="8">
    <location>
        <begin position="90"/>
        <end position="93"/>
    </location>
</feature>
<keyword id="KW-0002">3D-structure</keyword>
<keyword id="KW-0034">Amyloid</keyword>
<keyword id="KW-0165">Cleavage on pair of basic residues</keyword>
<keyword id="KW-0903">Direct protein sequencing</keyword>
<keyword id="KW-0225">Disease variant</keyword>
<keyword id="KW-0345">HDL</keyword>
<keyword id="KW-0445">Lipid transport</keyword>
<keyword id="KW-0558">Oxidation</keyword>
<keyword id="KW-1185">Reference proteome</keyword>
<keyword id="KW-0964">Secreted</keyword>
<keyword id="KW-0732">Signal</keyword>
<keyword id="KW-0813">Transport</keyword>
<proteinExistence type="evidence at protein level"/>
<accession>P09813</accession>
<accession>Q3UKX6</accession>
<accession>Q61317</accession>
<reference key="1">
    <citation type="journal article" date="1986" name="Nucleic Acids Res.">
        <title>Molecular cloning and nucleotide sequence of cDNA for murine senile amyloid protein: nucleotide substitutions found in apolipoprotein A-II cDNA of senescence accelerated mouse (SAM).</title>
        <authorList>
            <person name="Kunisada T."/>
            <person name="Higuchi K."/>
            <person name="Aota S."/>
            <person name="Takeda T."/>
            <person name="Yamagishi H."/>
        </authorList>
    </citation>
    <scope>NUCLEOTIDE SEQUENCE [MRNA]</scope>
    <scope>INVOLVEMENT IN SAM</scope>
</reference>
<reference key="2">
    <citation type="journal article" date="1989" name="Gene">
        <title>Structural organization of the gene encoding apolipoprotein A-II in an amyloidotic strain of senescence-accelerated mouse.</title>
        <authorList>
            <person name="Yonezu T."/>
            <person name="Toda M."/>
            <person name="Yamagishi H."/>
            <person name="Higuchi K."/>
            <person name="Takeda T."/>
        </authorList>
    </citation>
    <scope>NUCLEOTIDE SEQUENCE [GENOMIC DNA]</scope>
    <scope>INVOLVEMENT IN SAM</scope>
    <scope>VARIANT SAM GLN-28</scope>
</reference>
<reference key="3">
    <citation type="journal article" date="1990" name="J. Biol. Chem.">
        <title>A polymorphism affecting apolipoprotein A-II translational efficiency determines high density lipoprotein size and composition.</title>
        <authorList>
            <person name="Doolittle M.H."/>
            <person name="Leboeuf R.C."/>
            <person name="Warden C.H."/>
            <person name="Bee L.M."/>
            <person name="Lusis A.J."/>
        </authorList>
    </citation>
    <scope>NUCLEOTIDE SEQUENCE [MRNA]</scope>
    <source>
        <strain>BALB/cJ</strain>
        <strain>C3H/HeJ</strain>
        <strain>C57BL/6J</strain>
        <strain>DBA/2J</strain>
        <tissue>Liver</tissue>
    </source>
</reference>
<reference key="4">
    <citation type="journal article" date="1991" name="Biochem. J.">
        <title>Polymorphism of apolipoprotein A-II (apoA-II) among inbred strains of mice. Relationship between the molecular type of apoA-II and mouse senile amyloidosis.</title>
        <authorList>
            <person name="Higuchi K."/>
            <person name="Kitagawa K."/>
            <person name="Naiki H."/>
            <person name="Hanada K."/>
            <person name="Hosakawa M."/>
            <person name="Takeda T."/>
        </authorList>
    </citation>
    <scope>NUCLEOTIDE SEQUENCE [MRNA]</scope>
    <source>
        <strain>C57BL/6J</strain>
    </source>
</reference>
<reference key="5">
    <citation type="journal article" date="2005" name="Science">
        <title>The transcriptional landscape of the mammalian genome.</title>
        <authorList>
            <person name="Carninci P."/>
            <person name="Kasukawa T."/>
            <person name="Katayama S."/>
            <person name="Gough J."/>
            <person name="Frith M.C."/>
            <person name="Maeda N."/>
            <person name="Oyama R."/>
            <person name="Ravasi T."/>
            <person name="Lenhard B."/>
            <person name="Wells C."/>
            <person name="Kodzius R."/>
            <person name="Shimokawa K."/>
            <person name="Bajic V.B."/>
            <person name="Brenner S.E."/>
            <person name="Batalov S."/>
            <person name="Forrest A.R."/>
            <person name="Zavolan M."/>
            <person name="Davis M.J."/>
            <person name="Wilming L.G."/>
            <person name="Aidinis V."/>
            <person name="Allen J.E."/>
            <person name="Ambesi-Impiombato A."/>
            <person name="Apweiler R."/>
            <person name="Aturaliya R.N."/>
            <person name="Bailey T.L."/>
            <person name="Bansal M."/>
            <person name="Baxter L."/>
            <person name="Beisel K.W."/>
            <person name="Bersano T."/>
            <person name="Bono H."/>
            <person name="Chalk A.M."/>
            <person name="Chiu K.P."/>
            <person name="Choudhary V."/>
            <person name="Christoffels A."/>
            <person name="Clutterbuck D.R."/>
            <person name="Crowe M.L."/>
            <person name="Dalla E."/>
            <person name="Dalrymple B.P."/>
            <person name="de Bono B."/>
            <person name="Della Gatta G."/>
            <person name="di Bernardo D."/>
            <person name="Down T."/>
            <person name="Engstrom P."/>
            <person name="Fagiolini M."/>
            <person name="Faulkner G."/>
            <person name="Fletcher C.F."/>
            <person name="Fukushima T."/>
            <person name="Furuno M."/>
            <person name="Futaki S."/>
            <person name="Gariboldi M."/>
            <person name="Georgii-Hemming P."/>
            <person name="Gingeras T.R."/>
            <person name="Gojobori T."/>
            <person name="Green R.E."/>
            <person name="Gustincich S."/>
            <person name="Harbers M."/>
            <person name="Hayashi Y."/>
            <person name="Hensch T.K."/>
            <person name="Hirokawa N."/>
            <person name="Hill D."/>
            <person name="Huminiecki L."/>
            <person name="Iacono M."/>
            <person name="Ikeo K."/>
            <person name="Iwama A."/>
            <person name="Ishikawa T."/>
            <person name="Jakt M."/>
            <person name="Kanapin A."/>
            <person name="Katoh M."/>
            <person name="Kawasawa Y."/>
            <person name="Kelso J."/>
            <person name="Kitamura H."/>
            <person name="Kitano H."/>
            <person name="Kollias G."/>
            <person name="Krishnan S.P."/>
            <person name="Kruger A."/>
            <person name="Kummerfeld S.K."/>
            <person name="Kurochkin I.V."/>
            <person name="Lareau L.F."/>
            <person name="Lazarevic D."/>
            <person name="Lipovich L."/>
            <person name="Liu J."/>
            <person name="Liuni S."/>
            <person name="McWilliam S."/>
            <person name="Madan Babu M."/>
            <person name="Madera M."/>
            <person name="Marchionni L."/>
            <person name="Matsuda H."/>
            <person name="Matsuzawa S."/>
            <person name="Miki H."/>
            <person name="Mignone F."/>
            <person name="Miyake S."/>
            <person name="Morris K."/>
            <person name="Mottagui-Tabar S."/>
            <person name="Mulder N."/>
            <person name="Nakano N."/>
            <person name="Nakauchi H."/>
            <person name="Ng P."/>
            <person name="Nilsson R."/>
            <person name="Nishiguchi S."/>
            <person name="Nishikawa S."/>
            <person name="Nori F."/>
            <person name="Ohara O."/>
            <person name="Okazaki Y."/>
            <person name="Orlando V."/>
            <person name="Pang K.C."/>
            <person name="Pavan W.J."/>
            <person name="Pavesi G."/>
            <person name="Pesole G."/>
            <person name="Petrovsky N."/>
            <person name="Piazza S."/>
            <person name="Reed J."/>
            <person name="Reid J.F."/>
            <person name="Ring B.Z."/>
            <person name="Ringwald M."/>
            <person name="Rost B."/>
            <person name="Ruan Y."/>
            <person name="Salzberg S.L."/>
            <person name="Sandelin A."/>
            <person name="Schneider C."/>
            <person name="Schoenbach C."/>
            <person name="Sekiguchi K."/>
            <person name="Semple C.A."/>
            <person name="Seno S."/>
            <person name="Sessa L."/>
            <person name="Sheng Y."/>
            <person name="Shibata Y."/>
            <person name="Shimada H."/>
            <person name="Shimada K."/>
            <person name="Silva D."/>
            <person name="Sinclair B."/>
            <person name="Sperling S."/>
            <person name="Stupka E."/>
            <person name="Sugiura K."/>
            <person name="Sultana R."/>
            <person name="Takenaka Y."/>
            <person name="Taki K."/>
            <person name="Tammoja K."/>
            <person name="Tan S.L."/>
            <person name="Tang S."/>
            <person name="Taylor M.S."/>
            <person name="Tegner J."/>
            <person name="Teichmann S.A."/>
            <person name="Ueda H.R."/>
            <person name="van Nimwegen E."/>
            <person name="Verardo R."/>
            <person name="Wei C.L."/>
            <person name="Yagi K."/>
            <person name="Yamanishi H."/>
            <person name="Zabarovsky E."/>
            <person name="Zhu S."/>
            <person name="Zimmer A."/>
            <person name="Hide W."/>
            <person name="Bult C."/>
            <person name="Grimmond S.M."/>
            <person name="Teasdale R.D."/>
            <person name="Liu E.T."/>
            <person name="Brusic V."/>
            <person name="Quackenbush J."/>
            <person name="Wahlestedt C."/>
            <person name="Mattick J.S."/>
            <person name="Hume D.A."/>
            <person name="Kai C."/>
            <person name="Sasaki D."/>
            <person name="Tomaru Y."/>
            <person name="Fukuda S."/>
            <person name="Kanamori-Katayama M."/>
            <person name="Suzuki M."/>
            <person name="Aoki J."/>
            <person name="Arakawa T."/>
            <person name="Iida J."/>
            <person name="Imamura K."/>
            <person name="Itoh M."/>
            <person name="Kato T."/>
            <person name="Kawaji H."/>
            <person name="Kawagashira N."/>
            <person name="Kawashima T."/>
            <person name="Kojima M."/>
            <person name="Kondo S."/>
            <person name="Konno H."/>
            <person name="Nakano K."/>
            <person name="Ninomiya N."/>
            <person name="Nishio T."/>
            <person name="Okada M."/>
            <person name="Plessy C."/>
            <person name="Shibata K."/>
            <person name="Shiraki T."/>
            <person name="Suzuki S."/>
            <person name="Tagami M."/>
            <person name="Waki K."/>
            <person name="Watahiki A."/>
            <person name="Okamura-Oho Y."/>
            <person name="Suzuki H."/>
            <person name="Kawai J."/>
            <person name="Hayashizaki Y."/>
        </authorList>
    </citation>
    <scope>NUCLEOTIDE SEQUENCE [LARGE SCALE MRNA]</scope>
    <source>
        <strain>C57BL/6J</strain>
        <tissue>Amnion</tissue>
    </source>
</reference>
<reference key="6">
    <citation type="journal article" date="2009" name="PLoS Biol.">
        <title>Lineage-specific biology revealed by a finished genome assembly of the mouse.</title>
        <authorList>
            <person name="Church D.M."/>
            <person name="Goodstadt L."/>
            <person name="Hillier L.W."/>
            <person name="Zody M.C."/>
            <person name="Goldstein S."/>
            <person name="She X."/>
            <person name="Bult C.J."/>
            <person name="Agarwala R."/>
            <person name="Cherry J.L."/>
            <person name="DiCuccio M."/>
            <person name="Hlavina W."/>
            <person name="Kapustin Y."/>
            <person name="Meric P."/>
            <person name="Maglott D."/>
            <person name="Birtle Z."/>
            <person name="Marques A.C."/>
            <person name="Graves T."/>
            <person name="Zhou S."/>
            <person name="Teague B."/>
            <person name="Potamousis K."/>
            <person name="Churas C."/>
            <person name="Place M."/>
            <person name="Herschleb J."/>
            <person name="Runnheim R."/>
            <person name="Forrest D."/>
            <person name="Amos-Landgraf J."/>
            <person name="Schwartz D.C."/>
            <person name="Cheng Z."/>
            <person name="Lindblad-Toh K."/>
            <person name="Eichler E.E."/>
            <person name="Ponting C.P."/>
        </authorList>
    </citation>
    <scope>NUCLEOTIDE SEQUENCE [LARGE SCALE GENOMIC DNA]</scope>
    <source>
        <strain>C57BL/6J</strain>
    </source>
</reference>
<reference key="7">
    <citation type="submission" date="2005-09" db="EMBL/GenBank/DDBJ databases">
        <authorList>
            <person name="Mural R.J."/>
            <person name="Adams M.D."/>
            <person name="Myers E.W."/>
            <person name="Smith H.O."/>
            <person name="Venter J.C."/>
        </authorList>
    </citation>
    <scope>NUCLEOTIDE SEQUENCE [LARGE SCALE GENOMIC DNA]</scope>
</reference>
<reference key="8">
    <citation type="journal article" date="2004" name="Genome Res.">
        <title>The status, quality, and expansion of the NIH full-length cDNA project: the Mammalian Gene Collection (MGC).</title>
        <authorList>
            <consortium name="The MGC Project Team"/>
        </authorList>
    </citation>
    <scope>NUCLEOTIDE SEQUENCE [LARGE SCALE MRNA]</scope>
    <source>
        <strain>FVB/N</strain>
        <tissue>Liver</tissue>
    </source>
</reference>
<reference key="9">
    <citation type="journal article" date="1986" name="FEBS Lett.">
        <title>The single proline-glutamine substitution at position 5 enhances the potency of amyloid fibril formation of murine apo A-II.</title>
        <authorList>
            <person name="Higuchi K."/>
            <person name="Yonezu T."/>
            <person name="Tsunasawa S."/>
            <person name="Sakiyama F."/>
            <person name="Takeda T."/>
        </authorList>
    </citation>
    <scope>PROTEIN SEQUENCE OF 24-102</scope>
</reference>
<reference key="10">
    <citation type="journal article" date="1986" name="FEBS Lett.">
        <title>High homology is present in the primary structures between murine senile amyloid protein (ASSAM) and human apolipoprotein A-II.</title>
        <authorList>
            <person name="Yonezu T."/>
            <person name="Higuchi K."/>
            <person name="Tsunasawa S."/>
            <person name="Takagi S."/>
            <person name="Sakiyama F."/>
            <person name="Takeda T."/>
        </authorList>
    </citation>
    <scope>PROTEIN SEQUENCE OF 24-102</scope>
</reference>
<reference key="11">
    <citation type="journal article" date="2006" name="Biochim. Biophys. Acta">
        <title>Mass spectral analysis of the apolipoproteins on mouse high density lipoproteins. Detection of post-translational modifications.</title>
        <authorList>
            <person name="Puppione D.L."/>
            <person name="Yam L.M."/>
            <person name="Bassilian S."/>
            <person name="Souda P."/>
            <person name="Castellani L.W."/>
            <person name="Schumaker V.N."/>
            <person name="Whitelegge J.P."/>
        </authorList>
    </citation>
    <scope>PROTEIN SEQUENCE OF 54-62 AND 68-77</scope>
    <scope>MASS SPECTROMETRY</scope>
    <scope>OXIDATION</scope>
</reference>
<reference key="12">
    <citation type="journal article" date="2010" name="Cell">
        <title>A tissue-specific atlas of mouse protein phosphorylation and expression.</title>
        <authorList>
            <person name="Huttlin E.L."/>
            <person name="Jedrychowski M.P."/>
            <person name="Elias J.E."/>
            <person name="Goswami T."/>
            <person name="Rad R."/>
            <person name="Beausoleil S.A."/>
            <person name="Villen J."/>
            <person name="Haas W."/>
            <person name="Sowa M.E."/>
            <person name="Gygi S.P."/>
        </authorList>
    </citation>
    <scope>IDENTIFICATION BY MASS SPECTROMETRY [LARGE SCALE ANALYSIS]</scope>
    <source>
        <tissue>Kidney</tissue>
        <tissue>Liver</tissue>
        <tissue>Lung</tissue>
        <tissue>Testis</tissue>
    </source>
</reference>
<name>APOA2_MOUSE</name>
<evidence type="ECO:0000250" key="1">
    <source>
        <dbReference type="UniProtKB" id="P02652"/>
    </source>
</evidence>
<evidence type="ECO:0000269" key="2">
    <source>
    </source>
</evidence>
<evidence type="ECO:0000269" key="3">
    <source>
    </source>
</evidence>
<evidence type="ECO:0000269" key="4">
    <source>
    </source>
</evidence>
<evidence type="ECO:0000269" key="5">
    <source>
    </source>
</evidence>
<evidence type="ECO:0000269" key="6">
    <source>
    </source>
</evidence>
<evidence type="ECO:0000305" key="7"/>
<evidence type="ECO:0007829" key="8">
    <source>
        <dbReference type="PDB" id="8OQ4"/>
    </source>
</evidence>
<evidence type="ECO:0007829" key="9">
    <source>
        <dbReference type="PDB" id="8OQ5"/>
    </source>
</evidence>
<comment type="function">
    <text>May stabilize HDL (high density lipoprotein) structure by its association with lipids, and affect the HDL metabolism.</text>
</comment>
<comment type="subunit">
    <text evidence="1">Monomer. Interacts with NAXE and NDRG1 (By similarity).</text>
</comment>
<comment type="subcellular location">
    <subcellularLocation>
        <location evidence="1">Secreted</location>
    </subcellularLocation>
</comment>
<comment type="tissue specificity">
    <text>Plasma.</text>
</comment>
<comment type="mass spectrometry" mass="8709.2" error="0.071" method="Electrospray" evidence="2">
    <molecule>Apolipoprotein A-II</molecule>
    <text>Strain C57BL/6. Without methionine sulfoxide.</text>
</comment>
<comment type="mass spectrometry" mass="8719.5" method="Electrospray" evidence="2">
    <molecule>Apolipoprotein A-II</molecule>
    <text>Strain BALB/c. Without methionine sulfoxide.</text>
</comment>
<comment type="mass spectrometry" mass="8725.3" error="0.283" method="Electrospray" evidence="2">
    <molecule>Apolipoprotein A-II</molecule>
    <text>Strain C57BL/6. With 1 methionine sulfoxide.</text>
</comment>
<comment type="mass spectrometry" mass="8742.0" method="Electrospray" evidence="2">
    <molecule>Apolipoprotein A-II</molecule>
    <text>Strain C57BL/6. With 2 methionine sulfoxides.</text>
</comment>
<comment type="mass spectrometry" mass="8735.2" method="Electrospray" evidence="2">
    <molecule>Apolipoprotein A-II</molecule>
    <text>Strain BALB/c. With 1 methionine sulfoxide.</text>
</comment>
<comment type="mass spectrometry" mass="9294.0" error="0.707" method="Electrospray" evidence="2">
    <molecule>Proapolipoprotein A-II</molecule>
    <text>Strain C57BL/6. Without methionine sulfoxide.</text>
</comment>
<comment type="mass spectrometry" mass="9304.0" method="Electrospray" evidence="2">
    <molecule>Proapolipoprotein A-II</molecule>
    <text>Strain BALB/c. Without methionine sulfoxide.</text>
</comment>
<comment type="disease">
    <text evidence="3 4">Defects in Apoa2 are the cause of senescence accelerated mouse (SAM), the senile amyloid is a mutated apolipoprotein A-II.</text>
</comment>
<comment type="miscellaneous">
    <text>The apo A-II stoichiometry in HDL molecules varies among inbred mice strains, because of structural polymorphisms affecting the apo A-II gene, which influence its translational efficiency.</text>
</comment>
<comment type="miscellaneous">
    <text>The sequence presented here is that of strain BALB/c and C3H/HeJ.</text>
</comment>
<comment type="similarity">
    <text evidence="7">Belongs to the apolipoprotein A2 family.</text>
</comment>
<gene>
    <name type="primary">Apoa2</name>
</gene>
<sequence length="102" mass="11309">MKLLAMVALLVTICSLEGALVKRQADGPDMQSLFTQYFQSMTDYGKDLMEKAKTSEIQSQAKAYFEKTHEQLTPLVRSAGTSLVNFFSSLMNLEEKPAPAAK</sequence>
<protein>
    <recommendedName>
        <fullName>Apolipoprotein A-II</fullName>
        <shortName>Apo-AII</shortName>
        <shortName>ApoA-II</shortName>
    </recommendedName>
    <alternativeName>
        <fullName>Apolipoprotein A2</fullName>
    </alternativeName>
    <component>
        <recommendedName>
            <fullName>Proapolipoprotein A-II</fullName>
            <shortName>ProapoA-II</shortName>
        </recommendedName>
    </component>
</protein>
<organism>
    <name type="scientific">Mus musculus</name>
    <name type="common">Mouse</name>
    <dbReference type="NCBI Taxonomy" id="10090"/>
    <lineage>
        <taxon>Eukaryota</taxon>
        <taxon>Metazoa</taxon>
        <taxon>Chordata</taxon>
        <taxon>Craniata</taxon>
        <taxon>Vertebrata</taxon>
        <taxon>Euteleostomi</taxon>
        <taxon>Mammalia</taxon>
        <taxon>Eutheria</taxon>
        <taxon>Euarchontoglires</taxon>
        <taxon>Glires</taxon>
        <taxon>Rodentia</taxon>
        <taxon>Myomorpha</taxon>
        <taxon>Muroidea</taxon>
        <taxon>Muridae</taxon>
        <taxon>Murinae</taxon>
        <taxon>Mus</taxon>
        <taxon>Mus</taxon>
    </lineage>
</organism>